<gene>
    <name type="primary">pelL</name>
    <name type="ordered locus">Dda3937_02794</name>
</gene>
<protein>
    <recommendedName>
        <fullName>Pectate lyase L</fullName>
        <ecNumber evidence="1 3">4.2.2.2</ecNumber>
    </recommendedName>
    <alternativeName>
        <fullName>Pectate transeliminase</fullName>
    </alternativeName>
    <alternativeName>
        <fullName>Pel9A</fullName>
    </alternativeName>
</protein>
<reference key="1">
    <citation type="journal article" date="1995" name="Mol. Microbiol.">
        <title>Characterization of the pelL gene encoding a novel pectate lyase of Erwinia chrysanthemi 3937.</title>
        <authorList>
            <person name="Lojkowska E."/>
            <person name="Masclaux C."/>
            <person name="Boccara M."/>
            <person name="Robert-Baudouy J."/>
            <person name="Hugouvieux-Cotte-Pattat N."/>
        </authorList>
    </citation>
    <scope>NUCLEOTIDE SEQUENCE [GENOMIC DNA]</scope>
    <scope>FUNCTION</scope>
    <scope>CATALYTIC ACTIVITY</scope>
    <scope>COFACTOR</scope>
    <scope>PH DEPENDENCE</scope>
    <scope>INDUCTION</scope>
    <scope>ROLE IN SOFT-ROT DISEASE</scope>
    <scope>DISRUPTION PHENOTYPE</scope>
    <source>
        <strain>3937</strain>
    </source>
</reference>
<reference key="2">
    <citation type="journal article" date="2011" name="J. Bacteriol.">
        <title>Genome sequence of the plant-pathogenic bacterium Dickeya dadantii 3937.</title>
        <authorList>
            <person name="Glasner J.D."/>
            <person name="Yang C.H."/>
            <person name="Reverchon S."/>
            <person name="Hugouvieux-Cotte-Pattat N."/>
            <person name="Condemine G."/>
            <person name="Bohin J.P."/>
            <person name="Van Gijsegem F."/>
            <person name="Yang S."/>
            <person name="Franza T."/>
            <person name="Expert D."/>
            <person name="Plunkett G. III"/>
            <person name="San Francisco M.J."/>
            <person name="Charkowski A.O."/>
            <person name="Py B."/>
            <person name="Bell K."/>
            <person name="Rauscher L."/>
            <person name="Rodriguez-Palenzuela P."/>
            <person name="Toussaint A."/>
            <person name="Holeva M.C."/>
            <person name="He S.Y."/>
            <person name="Douet V."/>
            <person name="Boccara M."/>
            <person name="Blanco C."/>
            <person name="Toth I."/>
            <person name="Anderson B.D."/>
            <person name="Biehl B.S."/>
            <person name="Mau B."/>
            <person name="Flynn S.M."/>
            <person name="Barras F."/>
            <person name="Lindeberg M."/>
            <person name="Birch P.R."/>
            <person name="Tsuyumu S."/>
            <person name="Shi X."/>
            <person name="Hibbing M."/>
            <person name="Yap M.N."/>
            <person name="Carpentier M."/>
            <person name="Dassa E."/>
            <person name="Umehara M."/>
            <person name="Kim J.F."/>
            <person name="Rusch M."/>
            <person name="Soni P."/>
            <person name="Mayhew G.F."/>
            <person name="Fouts D.E."/>
            <person name="Gill S.R."/>
            <person name="Blattner F.R."/>
            <person name="Keen N.T."/>
            <person name="Perna N.T."/>
        </authorList>
    </citation>
    <scope>NUCLEOTIDE SEQUENCE [LARGE SCALE GENOMIC DNA]</scope>
    <source>
        <strain>3937</strain>
    </source>
</reference>
<reference key="3">
    <citation type="journal article" date="1998" name="Acta Crystallogr. D">
        <title>Crystallization and preliminary X-ray analysis of a member of a new family of pectate lyases, PelL from Erwinia chrysanthemi.</title>
        <authorList>
            <person name="Shevchik V."/>
            <person name="Scott M."/>
            <person name="Mayans O."/>
            <person name="Jenkins J."/>
        </authorList>
    </citation>
    <scope>CRYSTALLIZATION</scope>
    <source>
        <strain>3937</strain>
    </source>
</reference>
<reference key="4">
    <citation type="journal article" date="1999" name="J. Bacteriol.">
        <title>Modes of action of five different endopectate lyases from Erwinia chrysanthemi 3937.</title>
        <authorList>
            <person name="Roy C."/>
            <person name="Kester H."/>
            <person name="Visser J."/>
            <person name="Shevchik V."/>
            <person name="Hugouvieux-Cotte-Pattat N."/>
            <person name="Robert-Baudouy J."/>
            <person name="Benen J."/>
        </authorList>
    </citation>
    <scope>FUNCTION</scope>
    <scope>CATALYTIC ACTIVITY</scope>
</reference>
<reference key="5">
    <citation type="journal article" date="2004" name="J. Biol. Chem.">
        <title>The crystal structure of pectate lyase Pel9A from Erwinia chrysanthemi.</title>
        <authorList>
            <person name="Jenkins J."/>
            <person name="Shevchik V.E."/>
            <person name="Hugouvieux-Cotte-Pattat N."/>
            <person name="Pickersgill R.W."/>
        </authorList>
    </citation>
    <scope>X-RAY CRYSTALLOGRAPHY (1.6 ANGSTROMS) OF 26-425 IN COMPLEX WITH CALCIUM IONS</scope>
    <scope>ACTIVE SITE</scope>
    <scope>CATALYTIC MECHANISM</scope>
    <scope>MUTAGENESIS OF LYS-273</scope>
    <source>
        <strain>3937</strain>
    </source>
</reference>
<keyword id="KW-0002">3D-structure</keyword>
<keyword id="KW-0106">Calcium</keyword>
<keyword id="KW-1015">Disulfide bond</keyword>
<keyword id="KW-0456">Lyase</keyword>
<keyword id="KW-0479">Metal-binding</keyword>
<keyword id="KW-1185">Reference proteome</keyword>
<keyword id="KW-0964">Secreted</keyword>
<keyword id="KW-0732">Signal</keyword>
<keyword id="KW-0843">Virulence</keyword>
<feature type="signal peptide" evidence="4">
    <location>
        <begin position="1"/>
        <end position="25"/>
    </location>
</feature>
<feature type="chain" id="PRO_0000233032" description="Pectate lyase L">
    <location>
        <begin position="26"/>
        <end position="425"/>
    </location>
</feature>
<feature type="active site" description="Proton acceptor" evidence="5">
    <location>
        <position position="273"/>
    </location>
</feature>
<feature type="binding site" evidence="2 6">
    <location>
        <position position="209"/>
    </location>
    <ligand>
        <name>Ca(2+)</name>
        <dbReference type="ChEBI" id="CHEBI:29108"/>
        <label>1</label>
    </ligand>
</feature>
<feature type="binding site" evidence="2 6">
    <location>
        <position position="233"/>
    </location>
    <ligand>
        <name>Ca(2+)</name>
        <dbReference type="ChEBI" id="CHEBI:29108"/>
        <label>1</label>
    </ligand>
</feature>
<feature type="binding site" evidence="2 6">
    <location>
        <position position="234"/>
    </location>
    <ligand>
        <name>Ca(2+)</name>
        <dbReference type="ChEBI" id="CHEBI:29108"/>
        <label>1</label>
    </ligand>
</feature>
<feature type="binding site" evidence="2 6">
    <location>
        <position position="237"/>
    </location>
    <ligand>
        <name>Ca(2+)</name>
        <dbReference type="ChEBI" id="CHEBI:29108"/>
        <label>1</label>
    </ligand>
</feature>
<feature type="binding site" evidence="2 6">
    <location>
        <position position="402"/>
    </location>
    <ligand>
        <name>Ca(2+)</name>
        <dbReference type="ChEBI" id="CHEBI:29108"/>
        <label>2</label>
    </ligand>
</feature>
<feature type="binding site" evidence="2 6">
    <location>
        <position position="413"/>
    </location>
    <ligand>
        <name>Ca(2+)</name>
        <dbReference type="ChEBI" id="CHEBI:29108"/>
        <label>2</label>
    </ligand>
</feature>
<feature type="binding site" evidence="2 6">
    <location>
        <position position="416"/>
    </location>
    <ligand>
        <name>Ca(2+)</name>
        <dbReference type="ChEBI" id="CHEBI:29108"/>
        <label>2</label>
    </ligand>
</feature>
<feature type="binding site" evidence="2 6">
    <location>
        <position position="418"/>
    </location>
    <ligand>
        <name>Ca(2+)</name>
        <dbReference type="ChEBI" id="CHEBI:29108"/>
        <label>2</label>
    </ligand>
</feature>
<feature type="binding site" evidence="2 6">
    <location>
        <position position="423"/>
    </location>
    <ligand>
        <name>Ca(2+)</name>
        <dbReference type="ChEBI" id="CHEBI:29108"/>
        <label>2</label>
    </ligand>
</feature>
<feature type="disulfide bond" evidence="2">
    <location>
        <begin position="28"/>
        <end position="114"/>
    </location>
</feature>
<feature type="mutagenesis site" description="Loss of catalytic activity." evidence="2">
    <original>K</original>
    <variation>A</variation>
    <location>
        <position position="273"/>
    </location>
</feature>
<feature type="turn" evidence="7">
    <location>
        <begin position="32"/>
        <end position="35"/>
    </location>
</feature>
<feature type="strand" evidence="7">
    <location>
        <begin position="41"/>
        <end position="44"/>
    </location>
</feature>
<feature type="strand" evidence="7">
    <location>
        <begin position="54"/>
        <end position="56"/>
    </location>
</feature>
<feature type="helix" evidence="7">
    <location>
        <begin position="63"/>
        <end position="69"/>
    </location>
</feature>
<feature type="strand" evidence="7">
    <location>
        <begin position="75"/>
        <end position="78"/>
    </location>
</feature>
<feature type="strand" evidence="7">
    <location>
        <begin position="80"/>
        <end position="84"/>
    </location>
</feature>
<feature type="strand" evidence="7">
    <location>
        <begin position="95"/>
        <end position="97"/>
    </location>
</feature>
<feature type="strand" evidence="7">
    <location>
        <begin position="107"/>
        <end position="111"/>
    </location>
</feature>
<feature type="helix" evidence="7">
    <location>
        <begin position="112"/>
        <end position="114"/>
    </location>
</feature>
<feature type="strand" evidence="7">
    <location>
        <begin position="117"/>
        <end position="120"/>
    </location>
</feature>
<feature type="strand" evidence="7">
    <location>
        <begin position="134"/>
        <end position="137"/>
    </location>
</feature>
<feature type="strand" evidence="7">
    <location>
        <begin position="142"/>
        <end position="151"/>
    </location>
</feature>
<feature type="strand" evidence="7">
    <location>
        <begin position="156"/>
        <end position="159"/>
    </location>
</feature>
<feature type="strand" evidence="7">
    <location>
        <begin position="161"/>
        <end position="163"/>
    </location>
</feature>
<feature type="strand" evidence="7">
    <location>
        <begin position="165"/>
        <end position="168"/>
    </location>
</feature>
<feature type="strand" evidence="7">
    <location>
        <begin position="170"/>
        <end position="173"/>
    </location>
</feature>
<feature type="strand" evidence="7">
    <location>
        <begin position="178"/>
        <end position="181"/>
    </location>
</feature>
<feature type="strand" evidence="7">
    <location>
        <begin position="189"/>
        <end position="192"/>
    </location>
</feature>
<feature type="strand" evidence="7">
    <location>
        <begin position="194"/>
        <end position="196"/>
    </location>
</feature>
<feature type="turn" evidence="7">
    <location>
        <begin position="201"/>
        <end position="205"/>
    </location>
</feature>
<feature type="strand" evidence="7">
    <location>
        <begin position="210"/>
        <end position="213"/>
    </location>
</feature>
<feature type="strand" evidence="7">
    <location>
        <begin position="222"/>
        <end position="225"/>
    </location>
</feature>
<feature type="strand" evidence="7">
    <location>
        <begin position="227"/>
        <end position="230"/>
    </location>
</feature>
<feature type="strand" evidence="7">
    <location>
        <begin position="235"/>
        <end position="237"/>
    </location>
</feature>
<feature type="strand" evidence="7">
    <location>
        <begin position="246"/>
        <end position="249"/>
    </location>
</feature>
<feature type="strand" evidence="7">
    <location>
        <begin position="251"/>
        <end position="254"/>
    </location>
</feature>
<feature type="strand" evidence="7">
    <location>
        <begin position="271"/>
        <end position="273"/>
    </location>
</feature>
<feature type="strand" evidence="7">
    <location>
        <begin position="284"/>
        <end position="287"/>
    </location>
</feature>
<feature type="strand" evidence="7">
    <location>
        <begin position="289"/>
        <end position="292"/>
    </location>
</feature>
<feature type="strand" evidence="7">
    <location>
        <begin position="294"/>
        <end position="299"/>
    </location>
</feature>
<feature type="strand" evidence="7">
    <location>
        <begin position="308"/>
        <end position="311"/>
    </location>
</feature>
<feature type="strand" evidence="7">
    <location>
        <begin position="313"/>
        <end position="323"/>
    </location>
</feature>
<feature type="strand" evidence="7">
    <location>
        <begin position="333"/>
        <end position="337"/>
    </location>
</feature>
<feature type="strand" evidence="7">
    <location>
        <begin position="339"/>
        <end position="343"/>
    </location>
</feature>
<feature type="strand" evidence="7">
    <location>
        <begin position="345"/>
        <end position="347"/>
    </location>
</feature>
<feature type="strand" evidence="7">
    <location>
        <begin position="349"/>
        <end position="355"/>
    </location>
</feature>
<feature type="turn" evidence="7">
    <location>
        <begin position="356"/>
        <end position="359"/>
    </location>
</feature>
<feature type="helix" evidence="7">
    <location>
        <begin position="365"/>
        <end position="367"/>
    </location>
</feature>
<feature type="strand" evidence="7">
    <location>
        <begin position="368"/>
        <end position="370"/>
    </location>
</feature>
<feature type="helix" evidence="7">
    <location>
        <begin position="373"/>
        <end position="377"/>
    </location>
</feature>
<feature type="turn" evidence="7">
    <location>
        <begin position="399"/>
        <end position="402"/>
    </location>
</feature>
<feature type="strand" evidence="7">
    <location>
        <begin position="419"/>
        <end position="421"/>
    </location>
</feature>
<accession>P0C1A7</accession>
<accession>E0SIP1</accession>
<accession>Q47473</accession>
<accession>Q59421</accession>
<evidence type="ECO:0000269" key="1">
    <source>
    </source>
</evidence>
<evidence type="ECO:0000269" key="2">
    <source>
    </source>
</evidence>
<evidence type="ECO:0000269" key="3">
    <source>
    </source>
</evidence>
<evidence type="ECO:0000305" key="4"/>
<evidence type="ECO:0000305" key="5">
    <source>
    </source>
</evidence>
<evidence type="ECO:0007744" key="6">
    <source>
        <dbReference type="PDB" id="1RU4"/>
    </source>
</evidence>
<evidence type="ECO:0007829" key="7">
    <source>
        <dbReference type="PDB" id="1RU4"/>
    </source>
</evidence>
<dbReference type="EC" id="4.2.2.2" evidence="1 3"/>
<dbReference type="EMBL" id="X81136">
    <property type="protein sequence ID" value="CAA57041.1"/>
    <property type="molecule type" value="Genomic_DNA"/>
</dbReference>
<dbReference type="EMBL" id="CP002038">
    <property type="protein sequence ID" value="ADM99100.1"/>
    <property type="molecule type" value="Genomic_DNA"/>
</dbReference>
<dbReference type="PIR" id="S69796">
    <property type="entry name" value="S69796"/>
</dbReference>
<dbReference type="RefSeq" id="WP_013318539.1">
    <property type="nucleotide sequence ID" value="NC_014500.1"/>
</dbReference>
<dbReference type="PDB" id="1RU4">
    <property type="method" value="X-ray"/>
    <property type="resolution" value="1.60 A"/>
    <property type="chains" value="A=26-425"/>
</dbReference>
<dbReference type="PDBsum" id="1RU4"/>
<dbReference type="SMR" id="P0C1A7"/>
<dbReference type="STRING" id="198628.Dda3937_02794"/>
<dbReference type="CAZy" id="PL9">
    <property type="family name" value="Polysaccharide Lyase Family 9"/>
</dbReference>
<dbReference type="KEGG" id="ddd:Dda3937_02794"/>
<dbReference type="PATRIC" id="fig|198628.6.peg.2890"/>
<dbReference type="eggNOG" id="COG4733">
    <property type="taxonomic scope" value="Bacteria"/>
</dbReference>
<dbReference type="HOGENOM" id="CLU_030634_2_0_6"/>
<dbReference type="OrthoDB" id="9762467at2"/>
<dbReference type="UniPathway" id="UPA00545">
    <property type="reaction ID" value="UER00824"/>
</dbReference>
<dbReference type="EvolutionaryTrace" id="P0C1A7"/>
<dbReference type="Proteomes" id="UP000006859">
    <property type="component" value="Chromosome"/>
</dbReference>
<dbReference type="GO" id="GO:0005576">
    <property type="term" value="C:extracellular region"/>
    <property type="evidence" value="ECO:0007669"/>
    <property type="project" value="UniProtKB-SubCell"/>
</dbReference>
<dbReference type="GO" id="GO:0046872">
    <property type="term" value="F:metal ion binding"/>
    <property type="evidence" value="ECO:0007669"/>
    <property type="project" value="UniProtKB-KW"/>
</dbReference>
<dbReference type="GO" id="GO:0030570">
    <property type="term" value="F:pectate lyase activity"/>
    <property type="evidence" value="ECO:0000314"/>
    <property type="project" value="UniProtKB"/>
</dbReference>
<dbReference type="GO" id="GO:0045490">
    <property type="term" value="P:pectin catabolic process"/>
    <property type="evidence" value="ECO:0007669"/>
    <property type="project" value="UniProtKB-UniPathway"/>
</dbReference>
<dbReference type="GO" id="GO:0052009">
    <property type="term" value="P:symbiont-mediated disruption of host cell wall"/>
    <property type="evidence" value="ECO:0000314"/>
    <property type="project" value="UniProtKB"/>
</dbReference>
<dbReference type="Gene3D" id="2.160.20.10">
    <property type="entry name" value="Single-stranded right-handed beta-helix, Pectin lyase-like"/>
    <property type="match status" value="1"/>
</dbReference>
<dbReference type="InterPro" id="IPR006626">
    <property type="entry name" value="PbH1"/>
</dbReference>
<dbReference type="InterPro" id="IPR012334">
    <property type="entry name" value="Pectin_lyas_fold"/>
</dbReference>
<dbReference type="InterPro" id="IPR011050">
    <property type="entry name" value="Pectin_lyase_fold/virulence"/>
</dbReference>
<dbReference type="InterPro" id="IPR053868">
    <property type="entry name" value="Pel9A-like_beta_helix"/>
</dbReference>
<dbReference type="InterPro" id="IPR052052">
    <property type="entry name" value="Polysaccharide_Lyase_9"/>
</dbReference>
<dbReference type="PANTHER" id="PTHR40088">
    <property type="entry name" value="PECTATE LYASE (EUROFUNG)"/>
    <property type="match status" value="1"/>
</dbReference>
<dbReference type="PANTHER" id="PTHR40088:SF1">
    <property type="entry name" value="PECTATE LYASE PEL9"/>
    <property type="match status" value="1"/>
</dbReference>
<dbReference type="Pfam" id="PF22842">
    <property type="entry name" value="Pel9A-like_beta_helix"/>
    <property type="match status" value="1"/>
</dbReference>
<dbReference type="SMART" id="SM00710">
    <property type="entry name" value="PbH1"/>
    <property type="match status" value="4"/>
</dbReference>
<dbReference type="SUPFAM" id="SSF51126">
    <property type="entry name" value="Pectin lyase-like"/>
    <property type="match status" value="1"/>
</dbReference>
<proteinExistence type="evidence at protein level"/>
<comment type="function">
    <text evidence="1 3">Presents an endo-cleaving activity on polygalacturonate or partially methylated pectin. Is effective in the maceration of plant tissue, and has an important role in soft-rot disease. Is 280-fold less active against polygalacturonate than the major pectate lyase PelB. When assayed on polygalacturonate, PelL releases oligogalacturonates of different sizes; upon prolonged incubation, PelL degrades the primary products to unsaturated tetramer and pentamer in addition to unsaturated dimer and trimer. When assayed on oligogalacturonates (degrees of polymerization of 2 to 8), it preferentially forms unsaturated tetramer, and displays the highest activity on the octamer.</text>
</comment>
<comment type="catalytic activity">
    <reaction evidence="1 3">
        <text>Eliminative cleavage of (1-&gt;4)-alpha-D-galacturonan to give oligosaccharides with 4-deoxy-alpha-D-galact-4-enuronosyl groups at their non-reducing ends.</text>
        <dbReference type="EC" id="4.2.2.2"/>
    </reaction>
</comment>
<comment type="cofactor">
    <cofactor evidence="3">
        <name>Ca(2+)</name>
        <dbReference type="ChEBI" id="CHEBI:29108"/>
    </cofactor>
</comment>
<comment type="biophysicochemical properties">
    <phDependence>
        <text evidence="3">Optimum pH is around 8.0.</text>
    </phDependence>
</comment>
<comment type="pathway">
    <text>Glycan metabolism; pectin degradation; 2-dehydro-3-deoxy-D-gluconate from pectin: step 2/5.</text>
</comment>
<comment type="subcellular location">
    <subcellularLocation>
        <location>Secreted</location>
    </subcellularLocation>
</comment>
<comment type="induction">
    <text evidence="3">By pectic catabolic products. Transcription of pelL is affected by growth phase, temperature, iron starvation, osmolarity, anaerobiosis, nitrogen starvation and catabolite repression. Regulation of pelL transcription appears to be independent of the KdgR repressor, but under the control of PecS.</text>
</comment>
<comment type="disruption phenotype">
    <text evidence="3">The pelL mutant displays a reduced virulence on potato tubers and Saintpaulia ionantha plants.</text>
</comment>
<comment type="similarity">
    <text evidence="4">Belongs to the polysaccharide lyase 9 family.</text>
</comment>
<sequence length="425" mass="45484">MKYLNCFISTGLAAFFLVNSTSVLAADCSSDLTSGISTKRIYYVAPNGNSSNNGSSFNAPMSFSAAMAAVNPGELILLKPGTYTIPYTQGKGNTITFNKSGKDGAPIYVAAANCGRAVFDFSFPDSQWVQASYGFYVTGDYWYFKGVEVTRAGYQGAYVIGSHNTFENTAFHHNRNTGLEINNGGSYNTVINSDAYRNYDPKKNGSMADGFGPKQKQGPGNRFVGCRAWENSDDGFDLFDSPQKVVIENSWAFRNGINYWNDSAFAGNGNGFKLGGNQAVGNHRITRSVAFGNVSKGFDQNNNAGGVTVINNTSYKNGINYGFGSNVQSGQKHYFRNNVSLSASVTVSNADAKSNSWDTGPAASASDFVSLDTSLATVSRDNDGTLPETSLFRLSANSKLINAGTKESNISYSGSAPDLGAFERN</sequence>
<name>PLYL_DICD3</name>
<organism>
    <name type="scientific">Dickeya dadantii (strain 3937)</name>
    <name type="common">Erwinia chrysanthemi (strain 3937)</name>
    <dbReference type="NCBI Taxonomy" id="198628"/>
    <lineage>
        <taxon>Bacteria</taxon>
        <taxon>Pseudomonadati</taxon>
        <taxon>Pseudomonadota</taxon>
        <taxon>Gammaproteobacteria</taxon>
        <taxon>Enterobacterales</taxon>
        <taxon>Pectobacteriaceae</taxon>
        <taxon>Dickeya</taxon>
    </lineage>
</organism>